<sequence length="139" mass="15304">MAQAAKKQNLGTGRRKTSSARVFLRSGTGQIIINGLPLDEYFGRETARMVVRQPLVKLDVQSRFDVYATVQGGGDSGQAGAIRHGITRALIQYDEEGGEGGTWRSTLRKAGFVTRDPRMVERKKVGLHGARRGTQFSKR</sequence>
<accession>A9NAB0</accession>
<organism>
    <name type="scientific">Coxiella burnetii (strain RSA 331 / Henzerling II)</name>
    <dbReference type="NCBI Taxonomy" id="360115"/>
    <lineage>
        <taxon>Bacteria</taxon>
        <taxon>Pseudomonadati</taxon>
        <taxon>Pseudomonadota</taxon>
        <taxon>Gammaproteobacteria</taxon>
        <taxon>Legionellales</taxon>
        <taxon>Coxiellaceae</taxon>
        <taxon>Coxiella</taxon>
    </lineage>
</organism>
<reference key="1">
    <citation type="submission" date="2007-11" db="EMBL/GenBank/DDBJ databases">
        <title>Genome sequencing of phylogenetically and phenotypically diverse Coxiella burnetii isolates.</title>
        <authorList>
            <person name="Seshadri R."/>
            <person name="Samuel J.E."/>
        </authorList>
    </citation>
    <scope>NUCLEOTIDE SEQUENCE [LARGE SCALE GENOMIC DNA]</scope>
    <source>
        <strain>RSA 331 / Henzerling II</strain>
    </source>
</reference>
<dbReference type="EMBL" id="CP000890">
    <property type="protein sequence ID" value="ABX77848.1"/>
    <property type="molecule type" value="Genomic_DNA"/>
</dbReference>
<dbReference type="RefSeq" id="WP_005773029.1">
    <property type="nucleotide sequence ID" value="NC_010117.1"/>
</dbReference>
<dbReference type="SMR" id="A9NAB0"/>
<dbReference type="KEGG" id="cbs:COXBURSA331_A1940"/>
<dbReference type="HOGENOM" id="CLU_046483_2_1_6"/>
<dbReference type="GO" id="GO:0022627">
    <property type="term" value="C:cytosolic small ribosomal subunit"/>
    <property type="evidence" value="ECO:0007669"/>
    <property type="project" value="TreeGrafter"/>
</dbReference>
<dbReference type="GO" id="GO:0003723">
    <property type="term" value="F:RNA binding"/>
    <property type="evidence" value="ECO:0007669"/>
    <property type="project" value="TreeGrafter"/>
</dbReference>
<dbReference type="GO" id="GO:0003735">
    <property type="term" value="F:structural constituent of ribosome"/>
    <property type="evidence" value="ECO:0007669"/>
    <property type="project" value="InterPro"/>
</dbReference>
<dbReference type="GO" id="GO:0006412">
    <property type="term" value="P:translation"/>
    <property type="evidence" value="ECO:0007669"/>
    <property type="project" value="UniProtKB-UniRule"/>
</dbReference>
<dbReference type="FunFam" id="3.30.230.10:FF:000001">
    <property type="entry name" value="30S ribosomal protein S9"/>
    <property type="match status" value="1"/>
</dbReference>
<dbReference type="Gene3D" id="3.30.230.10">
    <property type="match status" value="1"/>
</dbReference>
<dbReference type="HAMAP" id="MF_00532_B">
    <property type="entry name" value="Ribosomal_uS9_B"/>
    <property type="match status" value="1"/>
</dbReference>
<dbReference type="InterPro" id="IPR020568">
    <property type="entry name" value="Ribosomal_Su5_D2-typ_SF"/>
</dbReference>
<dbReference type="InterPro" id="IPR000754">
    <property type="entry name" value="Ribosomal_uS9"/>
</dbReference>
<dbReference type="InterPro" id="IPR023035">
    <property type="entry name" value="Ribosomal_uS9_bac/plastid"/>
</dbReference>
<dbReference type="InterPro" id="IPR020574">
    <property type="entry name" value="Ribosomal_uS9_CS"/>
</dbReference>
<dbReference type="InterPro" id="IPR014721">
    <property type="entry name" value="Ribsml_uS5_D2-typ_fold_subgr"/>
</dbReference>
<dbReference type="NCBIfam" id="NF001099">
    <property type="entry name" value="PRK00132.1"/>
    <property type="match status" value="1"/>
</dbReference>
<dbReference type="PANTHER" id="PTHR21569">
    <property type="entry name" value="RIBOSOMAL PROTEIN S9"/>
    <property type="match status" value="1"/>
</dbReference>
<dbReference type="PANTHER" id="PTHR21569:SF1">
    <property type="entry name" value="SMALL RIBOSOMAL SUBUNIT PROTEIN US9M"/>
    <property type="match status" value="1"/>
</dbReference>
<dbReference type="Pfam" id="PF00380">
    <property type="entry name" value="Ribosomal_S9"/>
    <property type="match status" value="1"/>
</dbReference>
<dbReference type="SUPFAM" id="SSF54211">
    <property type="entry name" value="Ribosomal protein S5 domain 2-like"/>
    <property type="match status" value="1"/>
</dbReference>
<dbReference type="PROSITE" id="PS00360">
    <property type="entry name" value="RIBOSOMAL_S9"/>
    <property type="match status" value="1"/>
</dbReference>
<proteinExistence type="inferred from homology"/>
<feature type="chain" id="PRO_1000081812" description="Small ribosomal subunit protein uS9">
    <location>
        <begin position="1"/>
        <end position="139"/>
    </location>
</feature>
<protein>
    <recommendedName>
        <fullName evidence="1">Small ribosomal subunit protein uS9</fullName>
    </recommendedName>
    <alternativeName>
        <fullName evidence="2">30S ribosomal protein S9</fullName>
    </alternativeName>
</protein>
<name>RS9_COXBR</name>
<comment type="similarity">
    <text evidence="1">Belongs to the universal ribosomal protein uS9 family.</text>
</comment>
<evidence type="ECO:0000255" key="1">
    <source>
        <dbReference type="HAMAP-Rule" id="MF_00532"/>
    </source>
</evidence>
<evidence type="ECO:0000305" key="2"/>
<keyword id="KW-0687">Ribonucleoprotein</keyword>
<keyword id="KW-0689">Ribosomal protein</keyword>
<gene>
    <name evidence="1" type="primary">rpsI</name>
    <name type="ordered locus">COXBURSA331_A1940</name>
</gene>